<accession>A6WVY1</accession>
<sequence>MSGLFETLGRRALFAFDAEQAHGLSIAGLKTGLVTCGAPNDPALSVKVAGLQFPNPLGMAAGYDKNAEVPDALLKLGFGFTEIGTITPRPQSGNPRPRIFRLVEDRAVINRLGFNNEGHDAAFKRLSQRAGKSGIVGVNIGANKDAEDRIADYVAGIRRFYQLARYFTVNISSPNTPGLRNLQARDSLRELLSRVLEARNEEGKMCTLKRPVFLKIAPDLANEELDDIAAEATEQKLDGIIISNTTLSRAGLKSAENRDETGGLSGAPLFDRSTIVLARMRERVGPDMPLIGVGGVDSAETALTKIKAGADLVQLYTGLIYRGPNLPAEIVRGLSAAVKREGVTNIAALRDRDTKDWARRELSA</sequence>
<feature type="chain" id="PRO_1000024194" description="Dihydroorotate dehydrogenase (quinone)">
    <location>
        <begin position="1"/>
        <end position="364"/>
    </location>
</feature>
<feature type="active site" description="Nucleophile" evidence="1">
    <location>
        <position position="173"/>
    </location>
</feature>
<feature type="binding site" evidence="1">
    <location>
        <begin position="61"/>
        <end position="65"/>
    </location>
    <ligand>
        <name>FMN</name>
        <dbReference type="ChEBI" id="CHEBI:58210"/>
    </ligand>
</feature>
<feature type="binding site" evidence="1">
    <location>
        <position position="65"/>
    </location>
    <ligand>
        <name>substrate</name>
    </ligand>
</feature>
<feature type="binding site" evidence="1">
    <location>
        <position position="85"/>
    </location>
    <ligand>
        <name>FMN</name>
        <dbReference type="ChEBI" id="CHEBI:58210"/>
    </ligand>
</feature>
<feature type="binding site" evidence="1">
    <location>
        <begin position="110"/>
        <end position="114"/>
    </location>
    <ligand>
        <name>substrate</name>
    </ligand>
</feature>
<feature type="binding site" evidence="1">
    <location>
        <position position="139"/>
    </location>
    <ligand>
        <name>FMN</name>
        <dbReference type="ChEBI" id="CHEBI:58210"/>
    </ligand>
</feature>
<feature type="binding site" evidence="1">
    <location>
        <position position="170"/>
    </location>
    <ligand>
        <name>FMN</name>
        <dbReference type="ChEBI" id="CHEBI:58210"/>
    </ligand>
</feature>
<feature type="binding site" evidence="1">
    <location>
        <position position="170"/>
    </location>
    <ligand>
        <name>substrate</name>
    </ligand>
</feature>
<feature type="binding site" evidence="1">
    <location>
        <position position="175"/>
    </location>
    <ligand>
        <name>substrate</name>
    </ligand>
</feature>
<feature type="binding site" evidence="1">
    <location>
        <position position="215"/>
    </location>
    <ligand>
        <name>FMN</name>
        <dbReference type="ChEBI" id="CHEBI:58210"/>
    </ligand>
</feature>
<feature type="binding site" evidence="1">
    <location>
        <position position="243"/>
    </location>
    <ligand>
        <name>FMN</name>
        <dbReference type="ChEBI" id="CHEBI:58210"/>
    </ligand>
</feature>
<feature type="binding site" evidence="1">
    <location>
        <begin position="244"/>
        <end position="245"/>
    </location>
    <ligand>
        <name>substrate</name>
    </ligand>
</feature>
<feature type="binding site" evidence="1">
    <location>
        <position position="266"/>
    </location>
    <ligand>
        <name>FMN</name>
        <dbReference type="ChEBI" id="CHEBI:58210"/>
    </ligand>
</feature>
<feature type="binding site" evidence="1">
    <location>
        <position position="295"/>
    </location>
    <ligand>
        <name>FMN</name>
        <dbReference type="ChEBI" id="CHEBI:58210"/>
    </ligand>
</feature>
<feature type="binding site" evidence="1">
    <location>
        <begin position="316"/>
        <end position="317"/>
    </location>
    <ligand>
        <name>FMN</name>
        <dbReference type="ChEBI" id="CHEBI:58210"/>
    </ligand>
</feature>
<evidence type="ECO:0000255" key="1">
    <source>
        <dbReference type="HAMAP-Rule" id="MF_00225"/>
    </source>
</evidence>
<organism>
    <name type="scientific">Brucella anthropi (strain ATCC 49188 / DSM 6882 / CCUG 24695 / JCM 21032 / LMG 3331 / NBRC 15819 / NCTC 12168 / Alc 37)</name>
    <name type="common">Ochrobactrum anthropi</name>
    <dbReference type="NCBI Taxonomy" id="439375"/>
    <lineage>
        <taxon>Bacteria</taxon>
        <taxon>Pseudomonadati</taxon>
        <taxon>Pseudomonadota</taxon>
        <taxon>Alphaproteobacteria</taxon>
        <taxon>Hyphomicrobiales</taxon>
        <taxon>Brucellaceae</taxon>
        <taxon>Brucella/Ochrobactrum group</taxon>
        <taxon>Brucella</taxon>
    </lineage>
</organism>
<gene>
    <name evidence="1" type="primary">pyrD</name>
    <name type="ordered locus">Oant_0404</name>
</gene>
<proteinExistence type="inferred from homology"/>
<name>PYRD_BRUA4</name>
<keyword id="KW-1003">Cell membrane</keyword>
<keyword id="KW-0285">Flavoprotein</keyword>
<keyword id="KW-0288">FMN</keyword>
<keyword id="KW-0472">Membrane</keyword>
<keyword id="KW-0560">Oxidoreductase</keyword>
<keyword id="KW-0665">Pyrimidine biosynthesis</keyword>
<keyword id="KW-1185">Reference proteome</keyword>
<protein>
    <recommendedName>
        <fullName evidence="1">Dihydroorotate dehydrogenase (quinone)</fullName>
        <ecNumber evidence="1">1.3.5.2</ecNumber>
    </recommendedName>
    <alternativeName>
        <fullName evidence="1">DHOdehase</fullName>
        <shortName evidence="1">DHOD</shortName>
        <shortName evidence="1">DHODase</shortName>
    </alternativeName>
    <alternativeName>
        <fullName evidence="1">Dihydroorotate oxidase</fullName>
    </alternativeName>
</protein>
<reference key="1">
    <citation type="journal article" date="2011" name="J. Bacteriol.">
        <title>Genome of Ochrobactrum anthropi ATCC 49188 T, a versatile opportunistic pathogen and symbiont of several eukaryotic hosts.</title>
        <authorList>
            <person name="Chain P.S."/>
            <person name="Lang D.M."/>
            <person name="Comerci D.J."/>
            <person name="Malfatti S.A."/>
            <person name="Vergez L.M."/>
            <person name="Shin M."/>
            <person name="Ugalde R.A."/>
            <person name="Garcia E."/>
            <person name="Tolmasky M.E."/>
        </authorList>
    </citation>
    <scope>NUCLEOTIDE SEQUENCE [LARGE SCALE GENOMIC DNA]</scope>
    <source>
        <strain>ATCC 49188 / DSM 6882 / CCUG 24695 / JCM 21032 / LMG 3331 / NBRC 15819 / NCTC 12168 / Alc 37</strain>
    </source>
</reference>
<comment type="function">
    <text evidence="1">Catalyzes the conversion of dihydroorotate to orotate with quinone as electron acceptor.</text>
</comment>
<comment type="catalytic activity">
    <reaction evidence="1">
        <text>(S)-dihydroorotate + a quinone = orotate + a quinol</text>
        <dbReference type="Rhea" id="RHEA:30187"/>
        <dbReference type="ChEBI" id="CHEBI:24646"/>
        <dbReference type="ChEBI" id="CHEBI:30839"/>
        <dbReference type="ChEBI" id="CHEBI:30864"/>
        <dbReference type="ChEBI" id="CHEBI:132124"/>
        <dbReference type="EC" id="1.3.5.2"/>
    </reaction>
</comment>
<comment type="cofactor">
    <cofactor evidence="1">
        <name>FMN</name>
        <dbReference type="ChEBI" id="CHEBI:58210"/>
    </cofactor>
    <text evidence="1">Binds 1 FMN per subunit.</text>
</comment>
<comment type="pathway">
    <text evidence="1">Pyrimidine metabolism; UMP biosynthesis via de novo pathway; orotate from (S)-dihydroorotate (quinone route): step 1/1.</text>
</comment>
<comment type="subunit">
    <text evidence="1">Monomer.</text>
</comment>
<comment type="subcellular location">
    <subcellularLocation>
        <location evidence="1">Cell membrane</location>
        <topology evidence="1">Peripheral membrane protein</topology>
    </subcellularLocation>
</comment>
<comment type="similarity">
    <text evidence="1">Belongs to the dihydroorotate dehydrogenase family. Type 2 subfamily.</text>
</comment>
<dbReference type="EC" id="1.3.5.2" evidence="1"/>
<dbReference type="EMBL" id="CP000758">
    <property type="protein sequence ID" value="ABS13135.1"/>
    <property type="molecule type" value="Genomic_DNA"/>
</dbReference>
<dbReference type="RefSeq" id="WP_012090704.1">
    <property type="nucleotide sequence ID" value="NC_009667.1"/>
</dbReference>
<dbReference type="SMR" id="A6WVY1"/>
<dbReference type="STRING" id="439375.Oant_0404"/>
<dbReference type="KEGG" id="oan:Oant_0404"/>
<dbReference type="PATRIC" id="fig|439375.7.peg.430"/>
<dbReference type="eggNOG" id="COG0167">
    <property type="taxonomic scope" value="Bacteria"/>
</dbReference>
<dbReference type="HOGENOM" id="CLU_013640_2_1_5"/>
<dbReference type="PhylomeDB" id="A6WVY1"/>
<dbReference type="UniPathway" id="UPA00070">
    <property type="reaction ID" value="UER00946"/>
</dbReference>
<dbReference type="Proteomes" id="UP000002301">
    <property type="component" value="Chromosome 1"/>
</dbReference>
<dbReference type="GO" id="GO:0005737">
    <property type="term" value="C:cytoplasm"/>
    <property type="evidence" value="ECO:0007669"/>
    <property type="project" value="InterPro"/>
</dbReference>
<dbReference type="GO" id="GO:0005886">
    <property type="term" value="C:plasma membrane"/>
    <property type="evidence" value="ECO:0007669"/>
    <property type="project" value="UniProtKB-SubCell"/>
</dbReference>
<dbReference type="GO" id="GO:0106430">
    <property type="term" value="F:dihydroorotate dehydrogenase (quinone) activity"/>
    <property type="evidence" value="ECO:0007669"/>
    <property type="project" value="UniProtKB-EC"/>
</dbReference>
<dbReference type="GO" id="GO:0006207">
    <property type="term" value="P:'de novo' pyrimidine nucleobase biosynthetic process"/>
    <property type="evidence" value="ECO:0007669"/>
    <property type="project" value="InterPro"/>
</dbReference>
<dbReference type="GO" id="GO:0044205">
    <property type="term" value="P:'de novo' UMP biosynthetic process"/>
    <property type="evidence" value="ECO:0007669"/>
    <property type="project" value="UniProtKB-UniRule"/>
</dbReference>
<dbReference type="CDD" id="cd04738">
    <property type="entry name" value="DHOD_2_like"/>
    <property type="match status" value="1"/>
</dbReference>
<dbReference type="Gene3D" id="3.20.20.70">
    <property type="entry name" value="Aldolase class I"/>
    <property type="match status" value="1"/>
</dbReference>
<dbReference type="HAMAP" id="MF_00225">
    <property type="entry name" value="DHO_dh_type2"/>
    <property type="match status" value="1"/>
</dbReference>
<dbReference type="InterPro" id="IPR013785">
    <property type="entry name" value="Aldolase_TIM"/>
</dbReference>
<dbReference type="InterPro" id="IPR050074">
    <property type="entry name" value="DHO_dehydrogenase"/>
</dbReference>
<dbReference type="InterPro" id="IPR005719">
    <property type="entry name" value="Dihydroorotate_DH_2"/>
</dbReference>
<dbReference type="InterPro" id="IPR005720">
    <property type="entry name" value="Dihydroorotate_DH_cat"/>
</dbReference>
<dbReference type="InterPro" id="IPR001295">
    <property type="entry name" value="Dihydroorotate_DH_CS"/>
</dbReference>
<dbReference type="NCBIfam" id="NF003645">
    <property type="entry name" value="PRK05286.1-2"/>
    <property type="match status" value="1"/>
</dbReference>
<dbReference type="NCBIfam" id="NF003652">
    <property type="entry name" value="PRK05286.2-5"/>
    <property type="match status" value="1"/>
</dbReference>
<dbReference type="NCBIfam" id="TIGR01036">
    <property type="entry name" value="pyrD_sub2"/>
    <property type="match status" value="1"/>
</dbReference>
<dbReference type="PANTHER" id="PTHR48109:SF4">
    <property type="entry name" value="DIHYDROOROTATE DEHYDROGENASE (QUINONE), MITOCHONDRIAL"/>
    <property type="match status" value="1"/>
</dbReference>
<dbReference type="PANTHER" id="PTHR48109">
    <property type="entry name" value="DIHYDROOROTATE DEHYDROGENASE (QUINONE), MITOCHONDRIAL-RELATED"/>
    <property type="match status" value="1"/>
</dbReference>
<dbReference type="Pfam" id="PF01180">
    <property type="entry name" value="DHO_dh"/>
    <property type="match status" value="1"/>
</dbReference>
<dbReference type="SUPFAM" id="SSF51395">
    <property type="entry name" value="FMN-linked oxidoreductases"/>
    <property type="match status" value="1"/>
</dbReference>
<dbReference type="PROSITE" id="PS00911">
    <property type="entry name" value="DHODEHASE_1"/>
    <property type="match status" value="1"/>
</dbReference>
<dbReference type="PROSITE" id="PS00912">
    <property type="entry name" value="DHODEHASE_2"/>
    <property type="match status" value="1"/>
</dbReference>